<dbReference type="EMBL" id="CP000446">
    <property type="protein sequence ID" value="ABI40994.1"/>
    <property type="molecule type" value="Genomic_DNA"/>
</dbReference>
<dbReference type="RefSeq" id="WP_011624651.1">
    <property type="nucleotide sequence ID" value="NC_008321.1"/>
</dbReference>
<dbReference type="SMR" id="Q0HD73"/>
<dbReference type="KEGG" id="she:Shewmr4_3931"/>
<dbReference type="HOGENOM" id="CLU_041018_1_0_6"/>
<dbReference type="GO" id="GO:0005886">
    <property type="term" value="C:plasma membrane"/>
    <property type="evidence" value="ECO:0007669"/>
    <property type="project" value="UniProtKB-SubCell"/>
</dbReference>
<dbReference type="GO" id="GO:0045259">
    <property type="term" value="C:proton-transporting ATP synthase complex"/>
    <property type="evidence" value="ECO:0007669"/>
    <property type="project" value="UniProtKB-KW"/>
</dbReference>
<dbReference type="GO" id="GO:0046933">
    <property type="term" value="F:proton-transporting ATP synthase activity, rotational mechanism"/>
    <property type="evidence" value="ECO:0007669"/>
    <property type="project" value="UniProtKB-UniRule"/>
</dbReference>
<dbReference type="GO" id="GO:0042777">
    <property type="term" value="P:proton motive force-driven plasma membrane ATP synthesis"/>
    <property type="evidence" value="ECO:0007669"/>
    <property type="project" value="TreeGrafter"/>
</dbReference>
<dbReference type="CDD" id="cd00310">
    <property type="entry name" value="ATP-synt_Fo_a_6"/>
    <property type="match status" value="1"/>
</dbReference>
<dbReference type="FunFam" id="1.20.120.220:FF:000002">
    <property type="entry name" value="ATP synthase subunit a"/>
    <property type="match status" value="1"/>
</dbReference>
<dbReference type="Gene3D" id="1.20.120.220">
    <property type="entry name" value="ATP synthase, F0 complex, subunit A"/>
    <property type="match status" value="1"/>
</dbReference>
<dbReference type="HAMAP" id="MF_01393">
    <property type="entry name" value="ATP_synth_a_bact"/>
    <property type="match status" value="1"/>
</dbReference>
<dbReference type="InterPro" id="IPR045082">
    <property type="entry name" value="ATP_syn_F0_a_bact/chloroplast"/>
</dbReference>
<dbReference type="InterPro" id="IPR000568">
    <property type="entry name" value="ATP_synth_F0_asu"/>
</dbReference>
<dbReference type="InterPro" id="IPR023011">
    <property type="entry name" value="ATP_synth_F0_asu_AS"/>
</dbReference>
<dbReference type="InterPro" id="IPR035908">
    <property type="entry name" value="F0_ATP_A_sf"/>
</dbReference>
<dbReference type="NCBIfam" id="TIGR01131">
    <property type="entry name" value="ATP_synt_6_or_A"/>
    <property type="match status" value="1"/>
</dbReference>
<dbReference type="NCBIfam" id="NF004477">
    <property type="entry name" value="PRK05815.1-1"/>
    <property type="match status" value="1"/>
</dbReference>
<dbReference type="PANTHER" id="PTHR42823">
    <property type="entry name" value="ATP SYNTHASE SUBUNIT A, CHLOROPLASTIC"/>
    <property type="match status" value="1"/>
</dbReference>
<dbReference type="PANTHER" id="PTHR42823:SF3">
    <property type="entry name" value="ATP SYNTHASE SUBUNIT A, CHLOROPLASTIC"/>
    <property type="match status" value="1"/>
</dbReference>
<dbReference type="Pfam" id="PF00119">
    <property type="entry name" value="ATP-synt_A"/>
    <property type="match status" value="1"/>
</dbReference>
<dbReference type="PRINTS" id="PR00123">
    <property type="entry name" value="ATPASEA"/>
</dbReference>
<dbReference type="SUPFAM" id="SSF81336">
    <property type="entry name" value="F1F0 ATP synthase subunit A"/>
    <property type="match status" value="1"/>
</dbReference>
<dbReference type="PROSITE" id="PS00449">
    <property type="entry name" value="ATPASE_A"/>
    <property type="match status" value="1"/>
</dbReference>
<sequence>MAATGEALTPQGYIQHHLTNLHVGEGFWTWHIDSLFFSVGLGVLFLWIFRSVGKKATSGVPGKLQCFIEMIVEFVDNSVKESFHGRNALIAPLALTIFVWVFMMNFMDMLPVDWLPWLASLAGVPYLKVVPTTDVNITFSLAIGVFVLIIYYSIKVKGVSGFVKELTLQPFNHKAMIPVNLLLETVTLIAKPISLALRLFGNLYAGELIFILIALMYGTNLLLSSLGVTLQLGWLIFHILVITLQAFIFMMLTIVYLSMAHEDH</sequence>
<organism>
    <name type="scientific">Shewanella sp. (strain MR-4)</name>
    <dbReference type="NCBI Taxonomy" id="60480"/>
    <lineage>
        <taxon>Bacteria</taxon>
        <taxon>Pseudomonadati</taxon>
        <taxon>Pseudomonadota</taxon>
        <taxon>Gammaproteobacteria</taxon>
        <taxon>Alteromonadales</taxon>
        <taxon>Shewanellaceae</taxon>
        <taxon>Shewanella</taxon>
    </lineage>
</organism>
<keyword id="KW-0066">ATP synthesis</keyword>
<keyword id="KW-0997">Cell inner membrane</keyword>
<keyword id="KW-1003">Cell membrane</keyword>
<keyword id="KW-0138">CF(0)</keyword>
<keyword id="KW-0375">Hydrogen ion transport</keyword>
<keyword id="KW-0406">Ion transport</keyword>
<keyword id="KW-0472">Membrane</keyword>
<keyword id="KW-0812">Transmembrane</keyword>
<keyword id="KW-1133">Transmembrane helix</keyword>
<keyword id="KW-0813">Transport</keyword>
<accession>Q0HD73</accession>
<protein>
    <recommendedName>
        <fullName evidence="1">ATP synthase subunit a</fullName>
    </recommendedName>
    <alternativeName>
        <fullName evidence="1">ATP synthase F0 sector subunit a</fullName>
    </alternativeName>
    <alternativeName>
        <fullName evidence="1">F-ATPase subunit 6</fullName>
    </alternativeName>
</protein>
<name>ATP6_SHESM</name>
<reference key="1">
    <citation type="submission" date="2006-08" db="EMBL/GenBank/DDBJ databases">
        <title>Complete sequence of Shewanella sp. MR-4.</title>
        <authorList>
            <consortium name="US DOE Joint Genome Institute"/>
            <person name="Copeland A."/>
            <person name="Lucas S."/>
            <person name="Lapidus A."/>
            <person name="Barry K."/>
            <person name="Detter J.C."/>
            <person name="Glavina del Rio T."/>
            <person name="Hammon N."/>
            <person name="Israni S."/>
            <person name="Dalin E."/>
            <person name="Tice H."/>
            <person name="Pitluck S."/>
            <person name="Kiss H."/>
            <person name="Brettin T."/>
            <person name="Bruce D."/>
            <person name="Han C."/>
            <person name="Tapia R."/>
            <person name="Gilna P."/>
            <person name="Schmutz J."/>
            <person name="Larimer F."/>
            <person name="Land M."/>
            <person name="Hauser L."/>
            <person name="Kyrpides N."/>
            <person name="Mikhailova N."/>
            <person name="Nealson K."/>
            <person name="Konstantinidis K."/>
            <person name="Klappenbach J."/>
            <person name="Tiedje J."/>
            <person name="Richardson P."/>
        </authorList>
    </citation>
    <scope>NUCLEOTIDE SEQUENCE [LARGE SCALE GENOMIC DNA]</scope>
    <source>
        <strain>MR-4</strain>
    </source>
</reference>
<gene>
    <name evidence="1" type="primary">atpB</name>
    <name type="ordered locus">Shewmr4_3931</name>
</gene>
<feature type="chain" id="PRO_0000362460" description="ATP synthase subunit a">
    <location>
        <begin position="1"/>
        <end position="264"/>
    </location>
</feature>
<feature type="transmembrane region" description="Helical" evidence="1">
    <location>
        <begin position="29"/>
        <end position="49"/>
    </location>
</feature>
<feature type="transmembrane region" description="Helical" evidence="1">
    <location>
        <begin position="87"/>
        <end position="107"/>
    </location>
</feature>
<feature type="transmembrane region" description="Helical" evidence="1">
    <location>
        <begin position="134"/>
        <end position="154"/>
    </location>
</feature>
<feature type="transmembrane region" description="Helical" evidence="1">
    <location>
        <begin position="177"/>
        <end position="197"/>
    </location>
</feature>
<feature type="transmembrane region" description="Helical" evidence="1">
    <location>
        <begin position="208"/>
        <end position="228"/>
    </location>
</feature>
<feature type="transmembrane region" description="Helical" evidence="1">
    <location>
        <begin position="235"/>
        <end position="255"/>
    </location>
</feature>
<proteinExistence type="inferred from homology"/>
<evidence type="ECO:0000255" key="1">
    <source>
        <dbReference type="HAMAP-Rule" id="MF_01393"/>
    </source>
</evidence>
<comment type="function">
    <text evidence="1">Key component of the proton channel; it plays a direct role in the translocation of protons across the membrane.</text>
</comment>
<comment type="subunit">
    <text evidence="1">F-type ATPases have 2 components, CF(1) - the catalytic core - and CF(0) - the membrane proton channel. CF(1) has five subunits: alpha(3), beta(3), gamma(1), delta(1), epsilon(1). CF(0) has three main subunits: a(1), b(2) and c(9-12). The alpha and beta chains form an alternating ring which encloses part of the gamma chain. CF(1) is attached to CF(0) by a central stalk formed by the gamma and epsilon chains, while a peripheral stalk is formed by the delta and b chains.</text>
</comment>
<comment type="subcellular location">
    <subcellularLocation>
        <location evidence="1">Cell inner membrane</location>
        <topology evidence="1">Multi-pass membrane protein</topology>
    </subcellularLocation>
</comment>
<comment type="similarity">
    <text evidence="1">Belongs to the ATPase A chain family.</text>
</comment>